<proteinExistence type="inferred from homology"/>
<reference key="1">
    <citation type="journal article" date="2001" name="Phycologia">
        <title>Plastid genome size and heterogeneous base composition of nuclear DNA from Ochrosphaera neapolitana (Prymnesiophyta).</title>
        <authorList>
            <person name="Saez A.G."/>
            <person name="Engel H."/>
            <person name="Medlin L.K."/>
            <person name="Huss V.A.R."/>
        </authorList>
    </citation>
    <scope>NUCLEOTIDE SEQUENCE [GENOMIC DNA]</scope>
    <source>
        <strain>CCMP593 / OCHRO / Plymouth163</strain>
    </source>
</reference>
<keyword id="KW-0066">ATP synthesis</keyword>
<keyword id="KW-0067">ATP-binding</keyword>
<keyword id="KW-0139">CF(1)</keyword>
<keyword id="KW-0150">Chloroplast</keyword>
<keyword id="KW-0375">Hydrogen ion transport</keyword>
<keyword id="KW-0406">Ion transport</keyword>
<keyword id="KW-0472">Membrane</keyword>
<keyword id="KW-0547">Nucleotide-binding</keyword>
<keyword id="KW-0934">Plastid</keyword>
<keyword id="KW-0793">Thylakoid</keyword>
<keyword id="KW-1278">Translocase</keyword>
<keyword id="KW-0813">Transport</keyword>
<accession>Q40612</accession>
<protein>
    <recommendedName>
        <fullName evidence="1">ATP synthase subunit beta, chloroplastic</fullName>
        <ecNumber evidence="1">7.1.2.2</ecNumber>
    </recommendedName>
    <alternativeName>
        <fullName evidence="1">ATP synthase F1 sector subunit beta</fullName>
    </alternativeName>
    <alternativeName>
        <fullName evidence="1">F-ATPase subunit beta</fullName>
    </alternativeName>
</protein>
<sequence>MVDVASKTGIISQIIGPVVDVEFSSGDLPKVYNAIVIDAGDKKVTCEVQQLLGNNKVRAVSMTSTDGLKRGASVLDTGSPITVPVGVPTLGRIFNVLGEPVDELGPCNAESGLPIHRPAPSFTELETKPSVFETGIKVVDLLAPYKRGGKIGLFGGAGVGKTVLIMELINNIAKAHGGVSVFGGVGERTREGNDLYAEMKESKVIDEDKLENSKVALVYGQMNEPPGARMRVGLTALTMAEYFRDVNKQDVLLFIDHIFRFVQAGSEVSALLGSMPSAVGYQPTLATEMGVLQERITSTNEGSITSIQAVYVPADDLTDPAPATTFAHLDATTVLSRGLASKGIYPAVDPLDSTSTMLQPEIVGTEHYATAQRIKETLQRYKELQDIIAILGLDELSEDDRLTVSRARKVERFLSQPFFVAEVFTGSPGKYVSLNDSIDGFNRLLNGEFDDLPEQSFYLVGDINEAIAKAAKLKG</sequence>
<organism>
    <name type="scientific">Ochrosphaera neapolitana</name>
    <dbReference type="NCBI Taxonomy" id="35137"/>
    <lineage>
        <taxon>Eukaryota</taxon>
        <taxon>Haptista</taxon>
        <taxon>Haptophyta</taxon>
        <taxon>Prymnesiophyceae</taxon>
        <taxon>Coccolithales</taxon>
        <taxon>Hymenomonadaceae</taxon>
        <taxon>Ochrosphaera</taxon>
    </lineage>
</organism>
<dbReference type="EC" id="7.1.2.2" evidence="1"/>
<dbReference type="EMBL" id="X99079">
    <property type="protein sequence ID" value="CAA67541.1"/>
    <property type="molecule type" value="Genomic_DNA"/>
</dbReference>
<dbReference type="SMR" id="Q40612"/>
<dbReference type="GO" id="GO:0009535">
    <property type="term" value="C:chloroplast thylakoid membrane"/>
    <property type="evidence" value="ECO:0007669"/>
    <property type="project" value="UniProtKB-SubCell"/>
</dbReference>
<dbReference type="GO" id="GO:0005739">
    <property type="term" value="C:mitochondrion"/>
    <property type="evidence" value="ECO:0007669"/>
    <property type="project" value="GOC"/>
</dbReference>
<dbReference type="GO" id="GO:0045259">
    <property type="term" value="C:proton-transporting ATP synthase complex"/>
    <property type="evidence" value="ECO:0007669"/>
    <property type="project" value="UniProtKB-KW"/>
</dbReference>
<dbReference type="GO" id="GO:0005524">
    <property type="term" value="F:ATP binding"/>
    <property type="evidence" value="ECO:0007669"/>
    <property type="project" value="UniProtKB-UniRule"/>
</dbReference>
<dbReference type="GO" id="GO:0016887">
    <property type="term" value="F:ATP hydrolysis activity"/>
    <property type="evidence" value="ECO:0007669"/>
    <property type="project" value="InterPro"/>
</dbReference>
<dbReference type="GO" id="GO:0046933">
    <property type="term" value="F:proton-transporting ATP synthase activity, rotational mechanism"/>
    <property type="evidence" value="ECO:0007669"/>
    <property type="project" value="UniProtKB-UniRule"/>
</dbReference>
<dbReference type="GO" id="GO:0042776">
    <property type="term" value="P:proton motive force-driven mitochondrial ATP synthesis"/>
    <property type="evidence" value="ECO:0007669"/>
    <property type="project" value="TreeGrafter"/>
</dbReference>
<dbReference type="CDD" id="cd18110">
    <property type="entry name" value="ATP-synt_F1_beta_C"/>
    <property type="match status" value="1"/>
</dbReference>
<dbReference type="CDD" id="cd18115">
    <property type="entry name" value="ATP-synt_F1_beta_N"/>
    <property type="match status" value="1"/>
</dbReference>
<dbReference type="CDD" id="cd01133">
    <property type="entry name" value="F1-ATPase_beta_CD"/>
    <property type="match status" value="1"/>
</dbReference>
<dbReference type="FunFam" id="1.10.1140.10:FF:000001">
    <property type="entry name" value="ATP synthase subunit beta"/>
    <property type="match status" value="1"/>
</dbReference>
<dbReference type="FunFam" id="3.40.50.12240:FF:000006">
    <property type="entry name" value="ATP synthase subunit beta"/>
    <property type="match status" value="1"/>
</dbReference>
<dbReference type="FunFam" id="3.40.50.300:FF:000026">
    <property type="entry name" value="ATP synthase subunit beta"/>
    <property type="match status" value="1"/>
</dbReference>
<dbReference type="Gene3D" id="2.40.10.170">
    <property type="match status" value="1"/>
</dbReference>
<dbReference type="Gene3D" id="1.10.1140.10">
    <property type="entry name" value="Bovine Mitochondrial F1-atpase, Atp Synthase Beta Chain, Chain D, domain 3"/>
    <property type="match status" value="1"/>
</dbReference>
<dbReference type="Gene3D" id="3.40.50.300">
    <property type="entry name" value="P-loop containing nucleotide triphosphate hydrolases"/>
    <property type="match status" value="1"/>
</dbReference>
<dbReference type="HAMAP" id="MF_01347">
    <property type="entry name" value="ATP_synth_beta_bact"/>
    <property type="match status" value="1"/>
</dbReference>
<dbReference type="InterPro" id="IPR003593">
    <property type="entry name" value="AAA+_ATPase"/>
</dbReference>
<dbReference type="InterPro" id="IPR055190">
    <property type="entry name" value="ATP-synt_VA_C"/>
</dbReference>
<dbReference type="InterPro" id="IPR005722">
    <property type="entry name" value="ATP_synth_F1_bsu"/>
</dbReference>
<dbReference type="InterPro" id="IPR020003">
    <property type="entry name" value="ATPase_a/bsu_AS"/>
</dbReference>
<dbReference type="InterPro" id="IPR050053">
    <property type="entry name" value="ATPase_alpha/beta_chains"/>
</dbReference>
<dbReference type="InterPro" id="IPR004100">
    <property type="entry name" value="ATPase_F1/V1/A1_a/bsu_N"/>
</dbReference>
<dbReference type="InterPro" id="IPR036121">
    <property type="entry name" value="ATPase_F1/V1/A1_a/bsu_N_sf"/>
</dbReference>
<dbReference type="InterPro" id="IPR000194">
    <property type="entry name" value="ATPase_F1/V1/A1_a/bsu_nucl-bd"/>
</dbReference>
<dbReference type="InterPro" id="IPR024034">
    <property type="entry name" value="ATPase_F1/V1_b/a_C"/>
</dbReference>
<dbReference type="InterPro" id="IPR027417">
    <property type="entry name" value="P-loop_NTPase"/>
</dbReference>
<dbReference type="NCBIfam" id="TIGR01039">
    <property type="entry name" value="atpD"/>
    <property type="match status" value="1"/>
</dbReference>
<dbReference type="PANTHER" id="PTHR15184">
    <property type="entry name" value="ATP SYNTHASE"/>
    <property type="match status" value="1"/>
</dbReference>
<dbReference type="PANTHER" id="PTHR15184:SF71">
    <property type="entry name" value="ATP SYNTHASE SUBUNIT BETA, MITOCHONDRIAL"/>
    <property type="match status" value="1"/>
</dbReference>
<dbReference type="Pfam" id="PF00006">
    <property type="entry name" value="ATP-synt_ab"/>
    <property type="match status" value="1"/>
</dbReference>
<dbReference type="Pfam" id="PF02874">
    <property type="entry name" value="ATP-synt_ab_N"/>
    <property type="match status" value="1"/>
</dbReference>
<dbReference type="Pfam" id="PF22919">
    <property type="entry name" value="ATP-synt_VA_C"/>
    <property type="match status" value="1"/>
</dbReference>
<dbReference type="SMART" id="SM00382">
    <property type="entry name" value="AAA"/>
    <property type="match status" value="1"/>
</dbReference>
<dbReference type="SUPFAM" id="SSF47917">
    <property type="entry name" value="C-terminal domain of alpha and beta subunits of F1 ATP synthase"/>
    <property type="match status" value="1"/>
</dbReference>
<dbReference type="SUPFAM" id="SSF50615">
    <property type="entry name" value="N-terminal domain of alpha and beta subunits of F1 ATP synthase"/>
    <property type="match status" value="1"/>
</dbReference>
<dbReference type="SUPFAM" id="SSF52540">
    <property type="entry name" value="P-loop containing nucleoside triphosphate hydrolases"/>
    <property type="match status" value="1"/>
</dbReference>
<dbReference type="PROSITE" id="PS00152">
    <property type="entry name" value="ATPASE_ALPHA_BETA"/>
    <property type="match status" value="1"/>
</dbReference>
<name>ATPB_OCHNE</name>
<feature type="chain" id="PRO_0000254503" description="ATP synthase subunit beta, chloroplastic">
    <location>
        <begin position="1"/>
        <end position="475"/>
    </location>
</feature>
<feature type="binding site" evidence="1">
    <location>
        <begin position="155"/>
        <end position="162"/>
    </location>
    <ligand>
        <name>ATP</name>
        <dbReference type="ChEBI" id="CHEBI:30616"/>
    </ligand>
</feature>
<geneLocation type="chloroplast"/>
<evidence type="ECO:0000255" key="1">
    <source>
        <dbReference type="HAMAP-Rule" id="MF_01347"/>
    </source>
</evidence>
<comment type="function">
    <text evidence="1">Produces ATP from ADP in the presence of a proton gradient across the membrane. The catalytic sites are hosted primarily by the beta subunits.</text>
</comment>
<comment type="catalytic activity">
    <reaction evidence="1">
        <text>ATP + H2O + 4 H(+)(in) = ADP + phosphate + 5 H(+)(out)</text>
        <dbReference type="Rhea" id="RHEA:57720"/>
        <dbReference type="ChEBI" id="CHEBI:15377"/>
        <dbReference type="ChEBI" id="CHEBI:15378"/>
        <dbReference type="ChEBI" id="CHEBI:30616"/>
        <dbReference type="ChEBI" id="CHEBI:43474"/>
        <dbReference type="ChEBI" id="CHEBI:456216"/>
        <dbReference type="EC" id="7.1.2.2"/>
    </reaction>
</comment>
<comment type="subunit">
    <text evidence="1">F-type ATPases have 2 components, CF(1) - the catalytic core - and CF(0) - the membrane proton channel. CF(1) has five subunits: alpha(3), beta(3), gamma(1), delta(1), epsilon(1). CF(0) has four main subunits: a(1), b(1), b'(1) and c(9-12).</text>
</comment>
<comment type="subcellular location">
    <subcellularLocation>
        <location evidence="1">Plastid</location>
        <location evidence="1">Chloroplast thylakoid membrane</location>
        <topology evidence="1">Peripheral membrane protein</topology>
    </subcellularLocation>
</comment>
<comment type="similarity">
    <text evidence="1">Belongs to the ATPase alpha/beta chains family.</text>
</comment>
<gene>
    <name evidence="1" type="primary">atpD</name>
</gene>